<accession>Q98HN3</accession>
<proteinExistence type="inferred from homology"/>
<reference key="1">
    <citation type="journal article" date="2000" name="DNA Res.">
        <title>Complete genome structure of the nitrogen-fixing symbiotic bacterium Mesorhizobium loti.</title>
        <authorList>
            <person name="Kaneko T."/>
            <person name="Nakamura Y."/>
            <person name="Sato S."/>
            <person name="Asamizu E."/>
            <person name="Kato T."/>
            <person name="Sasamoto S."/>
            <person name="Watanabe A."/>
            <person name="Idesawa K."/>
            <person name="Ishikawa A."/>
            <person name="Kawashima K."/>
            <person name="Kimura T."/>
            <person name="Kishida Y."/>
            <person name="Kiyokawa C."/>
            <person name="Kohara M."/>
            <person name="Matsumoto M."/>
            <person name="Matsuno A."/>
            <person name="Mochizuki Y."/>
            <person name="Nakayama S."/>
            <person name="Nakazaki N."/>
            <person name="Shimpo S."/>
            <person name="Sugimoto M."/>
            <person name="Takeuchi C."/>
            <person name="Yamada M."/>
            <person name="Tabata S."/>
        </authorList>
    </citation>
    <scope>NUCLEOTIDE SEQUENCE [LARGE SCALE GENOMIC DNA]</scope>
    <source>
        <strain>LMG 29417 / CECT 9101 / MAFF 303099</strain>
    </source>
</reference>
<comment type="function">
    <text evidence="1">Catalyzes the condensation of the acetyl group of acetyl-CoA with 3-methyl-2-oxobutanoate (2-ketoisovalerate) to form 3-carboxy-3-hydroxy-4-methylpentanoate (2-isopropylmalate).</text>
</comment>
<comment type="catalytic activity">
    <reaction evidence="1">
        <text>3-methyl-2-oxobutanoate + acetyl-CoA + H2O = (2S)-2-isopropylmalate + CoA + H(+)</text>
        <dbReference type="Rhea" id="RHEA:21524"/>
        <dbReference type="ChEBI" id="CHEBI:1178"/>
        <dbReference type="ChEBI" id="CHEBI:11851"/>
        <dbReference type="ChEBI" id="CHEBI:15377"/>
        <dbReference type="ChEBI" id="CHEBI:15378"/>
        <dbReference type="ChEBI" id="CHEBI:57287"/>
        <dbReference type="ChEBI" id="CHEBI:57288"/>
        <dbReference type="EC" id="2.3.3.13"/>
    </reaction>
</comment>
<comment type="cofactor">
    <cofactor evidence="1">
        <name>Mg(2+)</name>
        <dbReference type="ChEBI" id="CHEBI:18420"/>
    </cofactor>
</comment>
<comment type="pathway">
    <text evidence="1">Amino-acid biosynthesis; L-leucine biosynthesis; L-leucine from 3-methyl-2-oxobutanoate: step 1/4.</text>
</comment>
<comment type="subunit">
    <text evidence="1">Homodimer.</text>
</comment>
<comment type="subcellular location">
    <subcellularLocation>
        <location evidence="1">Cytoplasm</location>
    </subcellularLocation>
</comment>
<comment type="similarity">
    <text evidence="1">Belongs to the alpha-IPM synthase/homocitrate synthase family. LeuA type 2 subfamily.</text>
</comment>
<sequence>MPDAARKYQPYPTVGLTDRTWPNKVIDKAPIWCSVDLRDGNQALIDPMGHERKARMFGLLLDMGFKEIEIGFPSASQTDFDFARWCIEEGNVPADVSLQVLVQCRPELITRTFEALKGATNPIVHFYNSTSELQRRVVFEKDVGGIKRIATDAAKMITDMAAKAGGGYRFEYSPESFTGTELEVALEICNAVTEIVRPKPDNKLIINLPSTVEMSTPNIYADRIEWMCRNLDNRENLIISLHPHNDRGTGIATTELGLMAGADRVEGTLFGNGERTGNVDIVTLALNMYTQGVDPGIDCSDINRMKDVYEYSNQLKIPERHPYVGELVYTAFSGSHQDAINKGMKALKKANTSLWEVPYLPIDPADVGRSYEAIIRINSQSGKGGIAYVLQADYGLNLPRNLQIEFSQAIQAITDAEGKEVPAKRIHERFLETYVDQPGARLKFLDHHTYPDTAVKGRRVIEAVILDKGKEVTISGTGTGPIDGFVDALSRHVGVEMSVLDYSEHSMQRGSNASAISYVEMEYPGGKLFGAGINTNIVAASLEAVTSAANRIVGRKAR</sequence>
<protein>
    <recommendedName>
        <fullName evidence="1">2-isopropylmalate synthase</fullName>
        <ecNumber evidence="1">2.3.3.13</ecNumber>
    </recommendedName>
    <alternativeName>
        <fullName evidence="1">Alpha-IPM synthase</fullName>
    </alternativeName>
    <alternativeName>
        <fullName evidence="1">Alpha-isopropylmalate synthase</fullName>
    </alternativeName>
</protein>
<gene>
    <name evidence="1" type="primary">leuA</name>
    <name type="ordered locus">mlr2792</name>
</gene>
<organism>
    <name type="scientific">Mesorhizobium japonicum (strain LMG 29417 / CECT 9101 / MAFF 303099)</name>
    <name type="common">Mesorhizobium loti (strain MAFF 303099)</name>
    <dbReference type="NCBI Taxonomy" id="266835"/>
    <lineage>
        <taxon>Bacteria</taxon>
        <taxon>Pseudomonadati</taxon>
        <taxon>Pseudomonadota</taxon>
        <taxon>Alphaproteobacteria</taxon>
        <taxon>Hyphomicrobiales</taxon>
        <taxon>Phyllobacteriaceae</taxon>
        <taxon>Mesorhizobium</taxon>
    </lineage>
</organism>
<evidence type="ECO:0000255" key="1">
    <source>
        <dbReference type="HAMAP-Rule" id="MF_00572"/>
    </source>
</evidence>
<feature type="chain" id="PRO_0000140441" description="2-isopropylmalate synthase">
    <location>
        <begin position="1"/>
        <end position="558"/>
    </location>
</feature>
<feature type="domain" description="Pyruvate carboxyltransferase" evidence="1">
    <location>
        <begin position="30"/>
        <end position="303"/>
    </location>
</feature>
<feature type="region of interest" description="Regulatory domain" evidence="1">
    <location>
        <begin position="437"/>
        <end position="558"/>
    </location>
</feature>
<feature type="binding site" evidence="1">
    <location>
        <position position="39"/>
    </location>
    <ligand>
        <name>Mg(2+)</name>
        <dbReference type="ChEBI" id="CHEBI:18420"/>
    </ligand>
</feature>
<feature type="binding site" evidence="1">
    <location>
        <position position="242"/>
    </location>
    <ligand>
        <name>Mg(2+)</name>
        <dbReference type="ChEBI" id="CHEBI:18420"/>
    </ligand>
</feature>
<feature type="binding site" evidence="1">
    <location>
        <position position="244"/>
    </location>
    <ligand>
        <name>Mg(2+)</name>
        <dbReference type="ChEBI" id="CHEBI:18420"/>
    </ligand>
</feature>
<feature type="binding site" evidence="1">
    <location>
        <position position="278"/>
    </location>
    <ligand>
        <name>Mg(2+)</name>
        <dbReference type="ChEBI" id="CHEBI:18420"/>
    </ligand>
</feature>
<keyword id="KW-0028">Amino-acid biosynthesis</keyword>
<keyword id="KW-0100">Branched-chain amino acid biosynthesis</keyword>
<keyword id="KW-0963">Cytoplasm</keyword>
<keyword id="KW-0432">Leucine biosynthesis</keyword>
<keyword id="KW-0460">Magnesium</keyword>
<keyword id="KW-0479">Metal-binding</keyword>
<keyword id="KW-0808">Transferase</keyword>
<name>LEU1_RHILO</name>
<dbReference type="EC" id="2.3.3.13" evidence="1"/>
<dbReference type="EMBL" id="BA000012">
    <property type="protein sequence ID" value="BAB49833.1"/>
    <property type="molecule type" value="Genomic_DNA"/>
</dbReference>
<dbReference type="SMR" id="Q98HN3"/>
<dbReference type="KEGG" id="mlo:mlr2792"/>
<dbReference type="PATRIC" id="fig|266835.9.peg.2236"/>
<dbReference type="eggNOG" id="COG0119">
    <property type="taxonomic scope" value="Bacteria"/>
</dbReference>
<dbReference type="HOGENOM" id="CLU_004588_3_0_5"/>
<dbReference type="UniPathway" id="UPA00048">
    <property type="reaction ID" value="UER00070"/>
</dbReference>
<dbReference type="Proteomes" id="UP000000552">
    <property type="component" value="Chromosome"/>
</dbReference>
<dbReference type="GO" id="GO:0005737">
    <property type="term" value="C:cytoplasm"/>
    <property type="evidence" value="ECO:0007669"/>
    <property type="project" value="UniProtKB-SubCell"/>
</dbReference>
<dbReference type="GO" id="GO:0003852">
    <property type="term" value="F:2-isopropylmalate synthase activity"/>
    <property type="evidence" value="ECO:0007669"/>
    <property type="project" value="UniProtKB-UniRule"/>
</dbReference>
<dbReference type="GO" id="GO:0003985">
    <property type="term" value="F:acetyl-CoA C-acetyltransferase activity"/>
    <property type="evidence" value="ECO:0007669"/>
    <property type="project" value="UniProtKB-UniRule"/>
</dbReference>
<dbReference type="GO" id="GO:0000287">
    <property type="term" value="F:magnesium ion binding"/>
    <property type="evidence" value="ECO:0007669"/>
    <property type="project" value="UniProtKB-UniRule"/>
</dbReference>
<dbReference type="GO" id="GO:0009098">
    <property type="term" value="P:L-leucine biosynthetic process"/>
    <property type="evidence" value="ECO:0007669"/>
    <property type="project" value="UniProtKB-UniRule"/>
</dbReference>
<dbReference type="CDD" id="cd07942">
    <property type="entry name" value="DRE_TIM_LeuA"/>
    <property type="match status" value="1"/>
</dbReference>
<dbReference type="Gene3D" id="3.30.160.270">
    <property type="match status" value="1"/>
</dbReference>
<dbReference type="Gene3D" id="3.20.20.70">
    <property type="entry name" value="Aldolase class I"/>
    <property type="match status" value="1"/>
</dbReference>
<dbReference type="HAMAP" id="MF_00572">
    <property type="entry name" value="LeuA_type2"/>
    <property type="match status" value="1"/>
</dbReference>
<dbReference type="InterPro" id="IPR013709">
    <property type="entry name" value="2-isopropylmalate_synth_dimer"/>
</dbReference>
<dbReference type="InterPro" id="IPR002034">
    <property type="entry name" value="AIPM/Hcit_synth_CS"/>
</dbReference>
<dbReference type="InterPro" id="IPR013785">
    <property type="entry name" value="Aldolase_TIM"/>
</dbReference>
<dbReference type="InterPro" id="IPR005668">
    <property type="entry name" value="IPM_Synthase"/>
</dbReference>
<dbReference type="InterPro" id="IPR054692">
    <property type="entry name" value="LeuA-like_post-cat"/>
</dbReference>
<dbReference type="InterPro" id="IPR036230">
    <property type="entry name" value="LeuA_allosteric_dom_sf"/>
</dbReference>
<dbReference type="InterPro" id="IPR039371">
    <property type="entry name" value="LeuA_N_DRE-TIM"/>
</dbReference>
<dbReference type="InterPro" id="IPR000891">
    <property type="entry name" value="PYR_CT"/>
</dbReference>
<dbReference type="NCBIfam" id="TIGR00970">
    <property type="entry name" value="leuA_yeast"/>
    <property type="match status" value="1"/>
</dbReference>
<dbReference type="NCBIfam" id="NF002991">
    <property type="entry name" value="PRK03739.1"/>
    <property type="match status" value="1"/>
</dbReference>
<dbReference type="PANTHER" id="PTHR46911">
    <property type="match status" value="1"/>
</dbReference>
<dbReference type="PANTHER" id="PTHR46911:SF1">
    <property type="entry name" value="2-ISOPROPYLMALATE SYNTHASE"/>
    <property type="match status" value="1"/>
</dbReference>
<dbReference type="Pfam" id="PF00682">
    <property type="entry name" value="HMGL-like"/>
    <property type="match status" value="1"/>
</dbReference>
<dbReference type="Pfam" id="PF22615">
    <property type="entry name" value="IPMS_D2"/>
    <property type="match status" value="1"/>
</dbReference>
<dbReference type="Pfam" id="PF08502">
    <property type="entry name" value="LeuA_dimer"/>
    <property type="match status" value="1"/>
</dbReference>
<dbReference type="SMART" id="SM00917">
    <property type="entry name" value="LeuA_dimer"/>
    <property type="match status" value="1"/>
</dbReference>
<dbReference type="SUPFAM" id="SSF110921">
    <property type="entry name" value="2-isopropylmalate synthase LeuA, allosteric (dimerisation) domain"/>
    <property type="match status" value="1"/>
</dbReference>
<dbReference type="SUPFAM" id="SSF51569">
    <property type="entry name" value="Aldolase"/>
    <property type="match status" value="1"/>
</dbReference>
<dbReference type="SUPFAM" id="SSF89000">
    <property type="entry name" value="post-HMGL domain-like"/>
    <property type="match status" value="1"/>
</dbReference>
<dbReference type="PROSITE" id="PS00815">
    <property type="entry name" value="AIPM_HOMOCIT_SYNTH_1"/>
    <property type="match status" value="1"/>
</dbReference>
<dbReference type="PROSITE" id="PS00816">
    <property type="entry name" value="AIPM_HOMOCIT_SYNTH_2"/>
    <property type="match status" value="1"/>
</dbReference>
<dbReference type="PROSITE" id="PS50991">
    <property type="entry name" value="PYR_CT"/>
    <property type="match status" value="1"/>
</dbReference>